<name>RS6_BURPS</name>
<feature type="chain" id="PRO_0000176744" description="Small ribosomal subunit protein bS6">
    <location>
        <begin position="1"/>
        <end position="124"/>
    </location>
</feature>
<feature type="region of interest" description="Disordered" evidence="2">
    <location>
        <begin position="96"/>
        <end position="124"/>
    </location>
</feature>
<feature type="compositionally biased region" description="Low complexity" evidence="2">
    <location>
        <begin position="114"/>
        <end position="124"/>
    </location>
</feature>
<dbReference type="EMBL" id="BX571965">
    <property type="protein sequence ID" value="CAH35460.1"/>
    <property type="molecule type" value="Genomic_DNA"/>
</dbReference>
<dbReference type="RefSeq" id="WP_004193673.1">
    <property type="nucleotide sequence ID" value="NZ_CP009538.1"/>
</dbReference>
<dbReference type="RefSeq" id="YP_108080.1">
    <property type="nucleotide sequence ID" value="NC_006350.1"/>
</dbReference>
<dbReference type="SMR" id="Q63UY6"/>
<dbReference type="STRING" id="272560.BPSL1458"/>
<dbReference type="GeneID" id="93060533"/>
<dbReference type="KEGG" id="bps:BPSL1458"/>
<dbReference type="PATRIC" id="fig|272560.51.peg.3487"/>
<dbReference type="eggNOG" id="COG0360">
    <property type="taxonomic scope" value="Bacteria"/>
</dbReference>
<dbReference type="Proteomes" id="UP000000605">
    <property type="component" value="Chromosome 1"/>
</dbReference>
<dbReference type="GO" id="GO:0022627">
    <property type="term" value="C:cytosolic small ribosomal subunit"/>
    <property type="evidence" value="ECO:0007669"/>
    <property type="project" value="TreeGrafter"/>
</dbReference>
<dbReference type="GO" id="GO:0070181">
    <property type="term" value="F:small ribosomal subunit rRNA binding"/>
    <property type="evidence" value="ECO:0007669"/>
    <property type="project" value="TreeGrafter"/>
</dbReference>
<dbReference type="GO" id="GO:0003735">
    <property type="term" value="F:structural constituent of ribosome"/>
    <property type="evidence" value="ECO:0007669"/>
    <property type="project" value="InterPro"/>
</dbReference>
<dbReference type="GO" id="GO:0006412">
    <property type="term" value="P:translation"/>
    <property type="evidence" value="ECO:0007669"/>
    <property type="project" value="UniProtKB-UniRule"/>
</dbReference>
<dbReference type="CDD" id="cd00473">
    <property type="entry name" value="bS6"/>
    <property type="match status" value="1"/>
</dbReference>
<dbReference type="Gene3D" id="3.30.70.60">
    <property type="match status" value="1"/>
</dbReference>
<dbReference type="HAMAP" id="MF_00360">
    <property type="entry name" value="Ribosomal_bS6"/>
    <property type="match status" value="1"/>
</dbReference>
<dbReference type="InterPro" id="IPR000529">
    <property type="entry name" value="Ribosomal_bS6"/>
</dbReference>
<dbReference type="InterPro" id="IPR035980">
    <property type="entry name" value="Ribosomal_bS6_sf"/>
</dbReference>
<dbReference type="InterPro" id="IPR020814">
    <property type="entry name" value="Ribosomal_S6_plastid/chlpt"/>
</dbReference>
<dbReference type="InterPro" id="IPR014717">
    <property type="entry name" value="Transl_elong_EF1B/ribsomal_bS6"/>
</dbReference>
<dbReference type="NCBIfam" id="TIGR00166">
    <property type="entry name" value="S6"/>
    <property type="match status" value="1"/>
</dbReference>
<dbReference type="PANTHER" id="PTHR21011">
    <property type="entry name" value="MITOCHONDRIAL 28S RIBOSOMAL PROTEIN S6"/>
    <property type="match status" value="1"/>
</dbReference>
<dbReference type="PANTHER" id="PTHR21011:SF1">
    <property type="entry name" value="SMALL RIBOSOMAL SUBUNIT PROTEIN BS6M"/>
    <property type="match status" value="1"/>
</dbReference>
<dbReference type="Pfam" id="PF01250">
    <property type="entry name" value="Ribosomal_S6"/>
    <property type="match status" value="1"/>
</dbReference>
<dbReference type="SUPFAM" id="SSF54995">
    <property type="entry name" value="Ribosomal protein S6"/>
    <property type="match status" value="1"/>
</dbReference>
<sequence length="124" mass="14306">MRHYEIVFIVHPDQSEQVPAMIERYKSTITSHGGQIHRVEDWGRRQLAYMIEKLAKAHYVCMNIECDQTTLDELEHAFKFNDAVLRHLIVKMKKAETGPSPMMKEVQREEAKKAAAAQPTEAQA</sequence>
<accession>Q63UY6</accession>
<evidence type="ECO:0000255" key="1">
    <source>
        <dbReference type="HAMAP-Rule" id="MF_00360"/>
    </source>
</evidence>
<evidence type="ECO:0000256" key="2">
    <source>
        <dbReference type="SAM" id="MobiDB-lite"/>
    </source>
</evidence>
<evidence type="ECO:0000305" key="3"/>
<organism>
    <name type="scientific">Burkholderia pseudomallei (strain K96243)</name>
    <dbReference type="NCBI Taxonomy" id="272560"/>
    <lineage>
        <taxon>Bacteria</taxon>
        <taxon>Pseudomonadati</taxon>
        <taxon>Pseudomonadota</taxon>
        <taxon>Betaproteobacteria</taxon>
        <taxon>Burkholderiales</taxon>
        <taxon>Burkholderiaceae</taxon>
        <taxon>Burkholderia</taxon>
        <taxon>pseudomallei group</taxon>
    </lineage>
</organism>
<proteinExistence type="inferred from homology"/>
<gene>
    <name evidence="1" type="primary">rpsF</name>
    <name type="ordered locus">BPSL1458</name>
</gene>
<reference key="1">
    <citation type="journal article" date="2004" name="Proc. Natl. Acad. Sci. U.S.A.">
        <title>Genomic plasticity of the causative agent of melioidosis, Burkholderia pseudomallei.</title>
        <authorList>
            <person name="Holden M.T.G."/>
            <person name="Titball R.W."/>
            <person name="Peacock S.J."/>
            <person name="Cerdeno-Tarraga A.-M."/>
            <person name="Atkins T."/>
            <person name="Crossman L.C."/>
            <person name="Pitt T."/>
            <person name="Churcher C."/>
            <person name="Mungall K.L."/>
            <person name="Bentley S.D."/>
            <person name="Sebaihia M."/>
            <person name="Thomson N.R."/>
            <person name="Bason N."/>
            <person name="Beacham I.R."/>
            <person name="Brooks K."/>
            <person name="Brown K.A."/>
            <person name="Brown N.F."/>
            <person name="Challis G.L."/>
            <person name="Cherevach I."/>
            <person name="Chillingworth T."/>
            <person name="Cronin A."/>
            <person name="Crossett B."/>
            <person name="Davis P."/>
            <person name="DeShazer D."/>
            <person name="Feltwell T."/>
            <person name="Fraser A."/>
            <person name="Hance Z."/>
            <person name="Hauser H."/>
            <person name="Holroyd S."/>
            <person name="Jagels K."/>
            <person name="Keith K.E."/>
            <person name="Maddison M."/>
            <person name="Moule S."/>
            <person name="Price C."/>
            <person name="Quail M.A."/>
            <person name="Rabbinowitsch E."/>
            <person name="Rutherford K."/>
            <person name="Sanders M."/>
            <person name="Simmonds M."/>
            <person name="Songsivilai S."/>
            <person name="Stevens K."/>
            <person name="Tumapa S."/>
            <person name="Vesaratchavest M."/>
            <person name="Whitehead S."/>
            <person name="Yeats C."/>
            <person name="Barrell B.G."/>
            <person name="Oyston P.C.F."/>
            <person name="Parkhill J."/>
        </authorList>
    </citation>
    <scope>NUCLEOTIDE SEQUENCE [LARGE SCALE GENOMIC DNA]</scope>
    <source>
        <strain>K96243</strain>
    </source>
</reference>
<comment type="function">
    <text evidence="1">Binds together with bS18 to 16S ribosomal RNA.</text>
</comment>
<comment type="similarity">
    <text evidence="1">Belongs to the bacterial ribosomal protein bS6 family.</text>
</comment>
<protein>
    <recommendedName>
        <fullName evidence="1">Small ribosomal subunit protein bS6</fullName>
    </recommendedName>
    <alternativeName>
        <fullName evidence="3">30S ribosomal protein S6</fullName>
    </alternativeName>
</protein>
<keyword id="KW-1185">Reference proteome</keyword>
<keyword id="KW-0687">Ribonucleoprotein</keyword>
<keyword id="KW-0689">Ribosomal protein</keyword>
<keyword id="KW-0694">RNA-binding</keyword>
<keyword id="KW-0699">rRNA-binding</keyword>